<name>SYFA_BACC1</name>
<accession>Q72ZI1</accession>
<dbReference type="EC" id="6.1.1.20" evidence="1"/>
<dbReference type="EMBL" id="AE017194">
    <property type="protein sequence ID" value="AAS43588.1"/>
    <property type="molecule type" value="Genomic_DNA"/>
</dbReference>
<dbReference type="SMR" id="Q72ZI1"/>
<dbReference type="KEGG" id="bca:BCE_4687"/>
<dbReference type="HOGENOM" id="CLU_025086_0_1_9"/>
<dbReference type="Proteomes" id="UP000002527">
    <property type="component" value="Chromosome"/>
</dbReference>
<dbReference type="GO" id="GO:0005737">
    <property type="term" value="C:cytoplasm"/>
    <property type="evidence" value="ECO:0007669"/>
    <property type="project" value="UniProtKB-SubCell"/>
</dbReference>
<dbReference type="GO" id="GO:0005524">
    <property type="term" value="F:ATP binding"/>
    <property type="evidence" value="ECO:0007669"/>
    <property type="project" value="UniProtKB-UniRule"/>
</dbReference>
<dbReference type="GO" id="GO:0140096">
    <property type="term" value="F:catalytic activity, acting on a protein"/>
    <property type="evidence" value="ECO:0007669"/>
    <property type="project" value="UniProtKB-ARBA"/>
</dbReference>
<dbReference type="GO" id="GO:0000287">
    <property type="term" value="F:magnesium ion binding"/>
    <property type="evidence" value="ECO:0007669"/>
    <property type="project" value="UniProtKB-UniRule"/>
</dbReference>
<dbReference type="GO" id="GO:0004826">
    <property type="term" value="F:phenylalanine-tRNA ligase activity"/>
    <property type="evidence" value="ECO:0007669"/>
    <property type="project" value="UniProtKB-UniRule"/>
</dbReference>
<dbReference type="GO" id="GO:0016740">
    <property type="term" value="F:transferase activity"/>
    <property type="evidence" value="ECO:0007669"/>
    <property type="project" value="UniProtKB-ARBA"/>
</dbReference>
<dbReference type="GO" id="GO:0000049">
    <property type="term" value="F:tRNA binding"/>
    <property type="evidence" value="ECO:0007669"/>
    <property type="project" value="InterPro"/>
</dbReference>
<dbReference type="GO" id="GO:0006432">
    <property type="term" value="P:phenylalanyl-tRNA aminoacylation"/>
    <property type="evidence" value="ECO:0007669"/>
    <property type="project" value="UniProtKB-UniRule"/>
</dbReference>
<dbReference type="CDD" id="cd00496">
    <property type="entry name" value="PheRS_alpha_core"/>
    <property type="match status" value="1"/>
</dbReference>
<dbReference type="FunFam" id="3.30.930.10:FF:000003">
    <property type="entry name" value="Phenylalanine--tRNA ligase alpha subunit"/>
    <property type="match status" value="1"/>
</dbReference>
<dbReference type="Gene3D" id="3.30.930.10">
    <property type="entry name" value="Bira Bifunctional Protein, Domain 2"/>
    <property type="match status" value="1"/>
</dbReference>
<dbReference type="HAMAP" id="MF_00281">
    <property type="entry name" value="Phe_tRNA_synth_alpha1"/>
    <property type="match status" value="1"/>
</dbReference>
<dbReference type="InterPro" id="IPR006195">
    <property type="entry name" value="aa-tRNA-synth_II"/>
</dbReference>
<dbReference type="InterPro" id="IPR045864">
    <property type="entry name" value="aa-tRNA-synth_II/BPL/LPL"/>
</dbReference>
<dbReference type="InterPro" id="IPR004529">
    <property type="entry name" value="Phe-tRNA-synth_IIc_asu"/>
</dbReference>
<dbReference type="InterPro" id="IPR004188">
    <property type="entry name" value="Phe-tRNA_ligase_II_N"/>
</dbReference>
<dbReference type="InterPro" id="IPR022911">
    <property type="entry name" value="Phe_tRNA_ligase_alpha1_bac"/>
</dbReference>
<dbReference type="InterPro" id="IPR002319">
    <property type="entry name" value="Phenylalanyl-tRNA_Synthase"/>
</dbReference>
<dbReference type="InterPro" id="IPR010978">
    <property type="entry name" value="tRNA-bd_arm"/>
</dbReference>
<dbReference type="NCBIfam" id="TIGR00468">
    <property type="entry name" value="pheS"/>
    <property type="match status" value="1"/>
</dbReference>
<dbReference type="PANTHER" id="PTHR11538:SF41">
    <property type="entry name" value="PHENYLALANINE--TRNA LIGASE, MITOCHONDRIAL"/>
    <property type="match status" value="1"/>
</dbReference>
<dbReference type="PANTHER" id="PTHR11538">
    <property type="entry name" value="PHENYLALANYL-TRNA SYNTHETASE"/>
    <property type="match status" value="1"/>
</dbReference>
<dbReference type="Pfam" id="PF02912">
    <property type="entry name" value="Phe_tRNA-synt_N"/>
    <property type="match status" value="1"/>
</dbReference>
<dbReference type="Pfam" id="PF01409">
    <property type="entry name" value="tRNA-synt_2d"/>
    <property type="match status" value="1"/>
</dbReference>
<dbReference type="SUPFAM" id="SSF55681">
    <property type="entry name" value="Class II aaRS and biotin synthetases"/>
    <property type="match status" value="1"/>
</dbReference>
<dbReference type="SUPFAM" id="SSF46589">
    <property type="entry name" value="tRNA-binding arm"/>
    <property type="match status" value="1"/>
</dbReference>
<dbReference type="PROSITE" id="PS50862">
    <property type="entry name" value="AA_TRNA_LIGASE_II"/>
    <property type="match status" value="1"/>
</dbReference>
<evidence type="ECO:0000255" key="1">
    <source>
        <dbReference type="HAMAP-Rule" id="MF_00281"/>
    </source>
</evidence>
<gene>
    <name evidence="1" type="primary">pheS</name>
    <name type="ordered locus">BCE_4687</name>
</gene>
<protein>
    <recommendedName>
        <fullName evidence="1">Phenylalanine--tRNA ligase alpha subunit</fullName>
        <ecNumber evidence="1">6.1.1.20</ecNumber>
    </recommendedName>
    <alternativeName>
        <fullName evidence="1">Phenylalanyl-tRNA synthetase alpha subunit</fullName>
        <shortName evidence="1">PheRS</shortName>
    </alternativeName>
</protein>
<organism>
    <name type="scientific">Bacillus cereus (strain ATCC 10987 / NRS 248)</name>
    <dbReference type="NCBI Taxonomy" id="222523"/>
    <lineage>
        <taxon>Bacteria</taxon>
        <taxon>Bacillati</taxon>
        <taxon>Bacillota</taxon>
        <taxon>Bacilli</taxon>
        <taxon>Bacillales</taxon>
        <taxon>Bacillaceae</taxon>
        <taxon>Bacillus</taxon>
        <taxon>Bacillus cereus group</taxon>
    </lineage>
</organism>
<feature type="chain" id="PRO_0000126659" description="Phenylalanine--tRNA ligase alpha subunit">
    <location>
        <begin position="1"/>
        <end position="344"/>
    </location>
</feature>
<feature type="binding site" evidence="1">
    <location>
        <position position="256"/>
    </location>
    <ligand>
        <name>Mg(2+)</name>
        <dbReference type="ChEBI" id="CHEBI:18420"/>
        <note>shared with beta subunit</note>
    </ligand>
</feature>
<sequence length="344" mass="38976">MEARLKELKQKALELIEEAKELKGLNDVRVAYLGKKGPITEVLRGMGKLSAEERPRMGALVNEVREAIQTRLDDKISNLEKAVIEAKLATETIDVTLPGRPVETGCHHPLTAVVEQIEDVFIGMGYEVAEGTEVEKDYYNFEALNLPKDHPARDMQDTFYITEETLLRTHTSSVQARTMENNKEKGPIKIICPGKVYRRDDDDATHSHQFMQIEGLVIDKNIRMSDLKGTLQVFVKKMFGEDREIRLRPSFFPFTEPSVEMDISCMMCHGKGCGTCKGTGWIEILGAGMVHPNVLEMAGYDSKEYQGFAFGMGAERIAMLKYGVDDIRHFYTNDVRFLQQFKRA</sequence>
<reference key="1">
    <citation type="journal article" date="2004" name="Nucleic Acids Res.">
        <title>The genome sequence of Bacillus cereus ATCC 10987 reveals metabolic adaptations and a large plasmid related to Bacillus anthracis pXO1.</title>
        <authorList>
            <person name="Rasko D.A."/>
            <person name="Ravel J."/>
            <person name="Oekstad O.A."/>
            <person name="Helgason E."/>
            <person name="Cer R.Z."/>
            <person name="Jiang L."/>
            <person name="Shores K.A."/>
            <person name="Fouts D.E."/>
            <person name="Tourasse N.J."/>
            <person name="Angiuoli S.V."/>
            <person name="Kolonay J.F."/>
            <person name="Nelson W.C."/>
            <person name="Kolstoe A.-B."/>
            <person name="Fraser C.M."/>
            <person name="Read T.D."/>
        </authorList>
    </citation>
    <scope>NUCLEOTIDE SEQUENCE [LARGE SCALE GENOMIC DNA]</scope>
    <source>
        <strain>ATCC 10987 / NRS 248</strain>
    </source>
</reference>
<comment type="catalytic activity">
    <reaction evidence="1">
        <text>tRNA(Phe) + L-phenylalanine + ATP = L-phenylalanyl-tRNA(Phe) + AMP + diphosphate + H(+)</text>
        <dbReference type="Rhea" id="RHEA:19413"/>
        <dbReference type="Rhea" id="RHEA-COMP:9668"/>
        <dbReference type="Rhea" id="RHEA-COMP:9699"/>
        <dbReference type="ChEBI" id="CHEBI:15378"/>
        <dbReference type="ChEBI" id="CHEBI:30616"/>
        <dbReference type="ChEBI" id="CHEBI:33019"/>
        <dbReference type="ChEBI" id="CHEBI:58095"/>
        <dbReference type="ChEBI" id="CHEBI:78442"/>
        <dbReference type="ChEBI" id="CHEBI:78531"/>
        <dbReference type="ChEBI" id="CHEBI:456215"/>
        <dbReference type="EC" id="6.1.1.20"/>
    </reaction>
</comment>
<comment type="cofactor">
    <cofactor evidence="1">
        <name>Mg(2+)</name>
        <dbReference type="ChEBI" id="CHEBI:18420"/>
    </cofactor>
    <text evidence="1">Binds 2 magnesium ions per tetramer.</text>
</comment>
<comment type="subunit">
    <text evidence="1">Tetramer of two alpha and two beta subunits.</text>
</comment>
<comment type="subcellular location">
    <subcellularLocation>
        <location evidence="1">Cytoplasm</location>
    </subcellularLocation>
</comment>
<comment type="similarity">
    <text evidence="1">Belongs to the class-II aminoacyl-tRNA synthetase family. Phe-tRNA synthetase alpha subunit type 1 subfamily.</text>
</comment>
<keyword id="KW-0030">Aminoacyl-tRNA synthetase</keyword>
<keyword id="KW-0067">ATP-binding</keyword>
<keyword id="KW-0963">Cytoplasm</keyword>
<keyword id="KW-0436">Ligase</keyword>
<keyword id="KW-0460">Magnesium</keyword>
<keyword id="KW-0479">Metal-binding</keyword>
<keyword id="KW-0547">Nucleotide-binding</keyword>
<keyword id="KW-0648">Protein biosynthesis</keyword>
<proteinExistence type="inferred from homology"/>